<feature type="transit peptide" description="Mitochondrion" evidence="2">
    <location>
        <begin position="1"/>
        <end position="40"/>
    </location>
</feature>
<feature type="chain" id="PRO_0000405636" description="ATPase expression protein 2, mitochondrial">
    <location>
        <begin position="41"/>
        <end position="580"/>
    </location>
</feature>
<comment type="function">
    <text evidence="1">Required for translation of the mitochondrial OLI1 transcript coding for the mitochondrial ATP synthase subunit 9.</text>
</comment>
<comment type="subunit">
    <text evidence="1">Binds to the 5'UTR of the OLI1 mRNA.</text>
</comment>
<comment type="subcellular location">
    <subcellularLocation>
        <location evidence="1">Mitochondrion</location>
    </subcellularLocation>
</comment>
<comment type="similarity">
    <text evidence="3">Belongs to the AEP2 family.</text>
</comment>
<name>AEP2_YEAS6</name>
<protein>
    <recommendedName>
        <fullName>ATPase expression protein 2, mitochondrial</fullName>
    </recommendedName>
</protein>
<evidence type="ECO:0000250" key="1"/>
<evidence type="ECO:0000255" key="2"/>
<evidence type="ECO:0000305" key="3"/>
<dbReference type="EMBL" id="ABSV01001908">
    <property type="protein sequence ID" value="EDZ69943.1"/>
    <property type="molecule type" value="Genomic_DNA"/>
</dbReference>
<dbReference type="Proteomes" id="UP000008988">
    <property type="component" value="Unassembled WGS sequence"/>
</dbReference>
<dbReference type="GO" id="GO:0005739">
    <property type="term" value="C:mitochondrion"/>
    <property type="evidence" value="ECO:0007669"/>
    <property type="project" value="UniProtKB-SubCell"/>
</dbReference>
<dbReference type="GO" id="GO:0003723">
    <property type="term" value="F:RNA binding"/>
    <property type="evidence" value="ECO:0007669"/>
    <property type="project" value="UniProtKB-KW"/>
</dbReference>
<dbReference type="GO" id="GO:0006417">
    <property type="term" value="P:regulation of translation"/>
    <property type="evidence" value="ECO:0007669"/>
    <property type="project" value="UniProtKB-KW"/>
</dbReference>
<dbReference type="InterPro" id="IPR024319">
    <property type="entry name" value="ATPase_expression_mit"/>
</dbReference>
<dbReference type="Pfam" id="PF12921">
    <property type="entry name" value="ATP13"/>
    <property type="match status" value="1"/>
</dbReference>
<gene>
    <name type="primary">AEP2</name>
    <name type="synonym">ATP13</name>
    <name type="ORF">AWRI1631_134210</name>
</gene>
<proteinExistence type="inferred from homology"/>
<keyword id="KW-0496">Mitochondrion</keyword>
<keyword id="KW-0694">RNA-binding</keyword>
<keyword id="KW-0809">Transit peptide</keyword>
<keyword id="KW-0810">Translation regulation</keyword>
<organism>
    <name type="scientific">Saccharomyces cerevisiae (strain AWRI1631)</name>
    <name type="common">Baker's yeast</name>
    <dbReference type="NCBI Taxonomy" id="545124"/>
    <lineage>
        <taxon>Eukaryota</taxon>
        <taxon>Fungi</taxon>
        <taxon>Dikarya</taxon>
        <taxon>Ascomycota</taxon>
        <taxon>Saccharomycotina</taxon>
        <taxon>Saccharomycetes</taxon>
        <taxon>Saccharomycetales</taxon>
        <taxon>Saccharomycetaceae</taxon>
        <taxon>Saccharomyces</taxon>
    </lineage>
</organism>
<sequence>MWINRLVKHPSYSVLRFYTKRLCTVSVKSLREFGVLPNSTICHSVYPRRTYVMGRAVINDILIKKSYSTHTVCAIDRSKDENNGSAYDKFEAKGIPIDVHTLKRIISSSGMDESEFSKSISYLFAKTVDPEPKDVLSLEDLSFLLSKLYTQRFQIRRICRDINAKYSEFWFKLFSLYAEKVDAKRNQVNLRNTKLDACEIFDANLMIKNFIELGQLGKAQKILSFILDRNPDILLSPKNADISTIVHFLQLRCGALAPYWKIPDNSEQKQGFLRKMVRLGAKNTSIRLSSTYKAMDHQTLLKIADLALQEKKLLNSEDLLSTLIQSFGHLGQTQILERCIEHIWQISPQEFPSHVVIKHRGCYPSSKILVSILVSFYFNDHDLHRGLSILDSFIKHYPDVKLDALFWRRLFQLSHFAWTPANDKKATSVVRCWHLMKQWYASKRLRPSVDYETLRQLYDIMKKTGNFPLGIDVLRSFKPGIERTRAENAGKVNNIIIKYQKCIIKELVNRGRFSAVREFIDNYGFDRKMTKDLNIFCANRMFLRSKKMKNKIENKKEREKVRLDSFDDDEDDGMIIGSLW</sequence>
<accession>B5VQ50</accession>
<reference key="1">
    <citation type="journal article" date="2008" name="FEMS Yeast Res.">
        <title>Comparative genome analysis of a Saccharomyces cerevisiae wine strain.</title>
        <authorList>
            <person name="Borneman A.R."/>
            <person name="Forgan A.H."/>
            <person name="Pretorius I.S."/>
            <person name="Chambers P.J."/>
        </authorList>
    </citation>
    <scope>NUCLEOTIDE SEQUENCE [LARGE SCALE GENOMIC DNA]</scope>
    <source>
        <strain>AWRI1631</strain>
    </source>
</reference>